<dbReference type="EC" id="3.1.26.3" evidence="1"/>
<dbReference type="EMBL" id="CP000142">
    <property type="protein sequence ID" value="ABA88649.1"/>
    <property type="molecule type" value="Genomic_DNA"/>
</dbReference>
<dbReference type="RefSeq" id="WP_011341132.1">
    <property type="nucleotide sequence ID" value="NC_007498.2"/>
</dbReference>
<dbReference type="SMR" id="Q3A4Q8"/>
<dbReference type="STRING" id="338963.Pcar_1403"/>
<dbReference type="KEGG" id="pca:Pcar_1403"/>
<dbReference type="eggNOG" id="COG0571">
    <property type="taxonomic scope" value="Bacteria"/>
</dbReference>
<dbReference type="HOGENOM" id="CLU_000907_1_3_7"/>
<dbReference type="OrthoDB" id="9805026at2"/>
<dbReference type="Proteomes" id="UP000002534">
    <property type="component" value="Chromosome"/>
</dbReference>
<dbReference type="GO" id="GO:0005737">
    <property type="term" value="C:cytoplasm"/>
    <property type="evidence" value="ECO:0007669"/>
    <property type="project" value="UniProtKB-SubCell"/>
</dbReference>
<dbReference type="GO" id="GO:0003725">
    <property type="term" value="F:double-stranded RNA binding"/>
    <property type="evidence" value="ECO:0007669"/>
    <property type="project" value="TreeGrafter"/>
</dbReference>
<dbReference type="GO" id="GO:0046872">
    <property type="term" value="F:metal ion binding"/>
    <property type="evidence" value="ECO:0007669"/>
    <property type="project" value="UniProtKB-KW"/>
</dbReference>
<dbReference type="GO" id="GO:0004525">
    <property type="term" value="F:ribonuclease III activity"/>
    <property type="evidence" value="ECO:0007669"/>
    <property type="project" value="UniProtKB-UniRule"/>
</dbReference>
<dbReference type="GO" id="GO:0019843">
    <property type="term" value="F:rRNA binding"/>
    <property type="evidence" value="ECO:0007669"/>
    <property type="project" value="UniProtKB-KW"/>
</dbReference>
<dbReference type="GO" id="GO:0006397">
    <property type="term" value="P:mRNA processing"/>
    <property type="evidence" value="ECO:0007669"/>
    <property type="project" value="UniProtKB-UniRule"/>
</dbReference>
<dbReference type="GO" id="GO:0010468">
    <property type="term" value="P:regulation of gene expression"/>
    <property type="evidence" value="ECO:0007669"/>
    <property type="project" value="TreeGrafter"/>
</dbReference>
<dbReference type="GO" id="GO:0006364">
    <property type="term" value="P:rRNA processing"/>
    <property type="evidence" value="ECO:0007669"/>
    <property type="project" value="UniProtKB-UniRule"/>
</dbReference>
<dbReference type="GO" id="GO:0008033">
    <property type="term" value="P:tRNA processing"/>
    <property type="evidence" value="ECO:0007669"/>
    <property type="project" value="UniProtKB-KW"/>
</dbReference>
<dbReference type="CDD" id="cd10845">
    <property type="entry name" value="DSRM_RNAse_III_family"/>
    <property type="match status" value="1"/>
</dbReference>
<dbReference type="CDD" id="cd00593">
    <property type="entry name" value="RIBOc"/>
    <property type="match status" value="1"/>
</dbReference>
<dbReference type="FunFam" id="1.10.1520.10:FF:000001">
    <property type="entry name" value="Ribonuclease 3"/>
    <property type="match status" value="1"/>
</dbReference>
<dbReference type="FunFam" id="3.30.160.20:FF:000003">
    <property type="entry name" value="Ribonuclease 3"/>
    <property type="match status" value="1"/>
</dbReference>
<dbReference type="Gene3D" id="3.30.160.20">
    <property type="match status" value="1"/>
</dbReference>
<dbReference type="Gene3D" id="1.10.1520.10">
    <property type="entry name" value="Ribonuclease III domain"/>
    <property type="match status" value="1"/>
</dbReference>
<dbReference type="HAMAP" id="MF_00104">
    <property type="entry name" value="RNase_III"/>
    <property type="match status" value="1"/>
</dbReference>
<dbReference type="InterPro" id="IPR014720">
    <property type="entry name" value="dsRBD_dom"/>
</dbReference>
<dbReference type="InterPro" id="IPR011907">
    <property type="entry name" value="RNase_III"/>
</dbReference>
<dbReference type="InterPro" id="IPR000999">
    <property type="entry name" value="RNase_III_dom"/>
</dbReference>
<dbReference type="InterPro" id="IPR036389">
    <property type="entry name" value="RNase_III_sf"/>
</dbReference>
<dbReference type="NCBIfam" id="TIGR02191">
    <property type="entry name" value="RNaseIII"/>
    <property type="match status" value="1"/>
</dbReference>
<dbReference type="PANTHER" id="PTHR11207:SF0">
    <property type="entry name" value="RIBONUCLEASE 3"/>
    <property type="match status" value="1"/>
</dbReference>
<dbReference type="PANTHER" id="PTHR11207">
    <property type="entry name" value="RIBONUCLEASE III"/>
    <property type="match status" value="1"/>
</dbReference>
<dbReference type="Pfam" id="PF00035">
    <property type="entry name" value="dsrm"/>
    <property type="match status" value="1"/>
</dbReference>
<dbReference type="Pfam" id="PF14622">
    <property type="entry name" value="Ribonucleas_3_3"/>
    <property type="match status" value="1"/>
</dbReference>
<dbReference type="SMART" id="SM00358">
    <property type="entry name" value="DSRM"/>
    <property type="match status" value="1"/>
</dbReference>
<dbReference type="SMART" id="SM00535">
    <property type="entry name" value="RIBOc"/>
    <property type="match status" value="1"/>
</dbReference>
<dbReference type="SUPFAM" id="SSF54768">
    <property type="entry name" value="dsRNA-binding domain-like"/>
    <property type="match status" value="1"/>
</dbReference>
<dbReference type="SUPFAM" id="SSF69065">
    <property type="entry name" value="RNase III domain-like"/>
    <property type="match status" value="1"/>
</dbReference>
<dbReference type="PROSITE" id="PS50137">
    <property type="entry name" value="DS_RBD"/>
    <property type="match status" value="1"/>
</dbReference>
<dbReference type="PROSITE" id="PS00517">
    <property type="entry name" value="RNASE_3_1"/>
    <property type="match status" value="1"/>
</dbReference>
<dbReference type="PROSITE" id="PS50142">
    <property type="entry name" value="RNASE_3_2"/>
    <property type="match status" value="1"/>
</dbReference>
<keyword id="KW-0963">Cytoplasm</keyword>
<keyword id="KW-0255">Endonuclease</keyword>
<keyword id="KW-0378">Hydrolase</keyword>
<keyword id="KW-0460">Magnesium</keyword>
<keyword id="KW-0479">Metal-binding</keyword>
<keyword id="KW-0507">mRNA processing</keyword>
<keyword id="KW-0540">Nuclease</keyword>
<keyword id="KW-1185">Reference proteome</keyword>
<keyword id="KW-0694">RNA-binding</keyword>
<keyword id="KW-0698">rRNA processing</keyword>
<keyword id="KW-0699">rRNA-binding</keyword>
<keyword id="KW-0819">tRNA processing</keyword>
<organism>
    <name type="scientific">Syntrophotalea carbinolica (strain DSM 2380 / NBRC 103641 / GraBd1)</name>
    <name type="common">Pelobacter carbinolicus</name>
    <dbReference type="NCBI Taxonomy" id="338963"/>
    <lineage>
        <taxon>Bacteria</taxon>
        <taxon>Pseudomonadati</taxon>
        <taxon>Thermodesulfobacteriota</taxon>
        <taxon>Desulfuromonadia</taxon>
        <taxon>Desulfuromonadales</taxon>
        <taxon>Syntrophotaleaceae</taxon>
        <taxon>Syntrophotalea</taxon>
    </lineage>
</organism>
<evidence type="ECO:0000255" key="1">
    <source>
        <dbReference type="HAMAP-Rule" id="MF_00104"/>
    </source>
</evidence>
<gene>
    <name evidence="1" type="primary">rnc</name>
    <name type="ordered locus">Pcar_1403</name>
</gene>
<comment type="function">
    <text evidence="1">Digests double-stranded RNA. Involved in the processing of primary rRNA transcript to yield the immediate precursors to the large and small rRNAs (23S and 16S). Processes some mRNAs, and tRNAs when they are encoded in the rRNA operon. Processes pre-crRNA and tracrRNA of type II CRISPR loci if present in the organism.</text>
</comment>
<comment type="catalytic activity">
    <reaction evidence="1">
        <text>Endonucleolytic cleavage to 5'-phosphomonoester.</text>
        <dbReference type="EC" id="3.1.26.3"/>
    </reaction>
</comment>
<comment type="cofactor">
    <cofactor evidence="1">
        <name>Mg(2+)</name>
        <dbReference type="ChEBI" id="CHEBI:18420"/>
    </cofactor>
</comment>
<comment type="subunit">
    <text evidence="1">Homodimer.</text>
</comment>
<comment type="subcellular location">
    <subcellularLocation>
        <location evidence="1">Cytoplasm</location>
    </subcellularLocation>
</comment>
<comment type="similarity">
    <text evidence="1">Belongs to the ribonuclease III family.</text>
</comment>
<name>RNC_SYNC1</name>
<proteinExistence type="inferred from homology"/>
<sequence>MLEAKSAALLEDTIDYVFDNQALLLEALTHKSFSNEQNDRTEPDNERLEFLGDAVLGVVVSHYIFRTFPHLPEGELTRIRSEVVSEKGLTVIGKAICLGDYMRLGKGEERSGGRQKSSLLANTMEALLGAVFCDGGFDSVRRVIEALFIPHIQRAARRKTGVDYKTRLQERLQARFGDVPQYVLIHADGPPHQRSYSVEAHFRGSCIGQGQGRSKKSAEQAAAKQALEYLEE</sequence>
<reference key="1">
    <citation type="submission" date="2005-10" db="EMBL/GenBank/DDBJ databases">
        <title>Complete sequence of Pelobacter carbinolicus DSM 2380.</title>
        <authorList>
            <person name="Copeland A."/>
            <person name="Lucas S."/>
            <person name="Lapidus A."/>
            <person name="Barry K."/>
            <person name="Detter J.C."/>
            <person name="Glavina T."/>
            <person name="Hammon N."/>
            <person name="Israni S."/>
            <person name="Pitluck S."/>
            <person name="Chertkov O."/>
            <person name="Schmutz J."/>
            <person name="Larimer F."/>
            <person name="Land M."/>
            <person name="Kyrpides N."/>
            <person name="Ivanova N."/>
            <person name="Richardson P."/>
        </authorList>
    </citation>
    <scope>NUCLEOTIDE SEQUENCE [LARGE SCALE GENOMIC DNA]</scope>
    <source>
        <strain>DSM 2380 / NBRC 103641 / GraBd1</strain>
    </source>
</reference>
<accession>Q3A4Q8</accession>
<feature type="chain" id="PRO_0000228561" description="Ribonuclease 3">
    <location>
        <begin position="1"/>
        <end position="232"/>
    </location>
</feature>
<feature type="domain" description="RNase III" evidence="1">
    <location>
        <begin position="7"/>
        <end position="136"/>
    </location>
</feature>
<feature type="domain" description="DRBM" evidence="1">
    <location>
        <begin position="163"/>
        <end position="232"/>
    </location>
</feature>
<feature type="active site" evidence="1">
    <location>
        <position position="53"/>
    </location>
</feature>
<feature type="active site" evidence="1">
    <location>
        <position position="125"/>
    </location>
</feature>
<feature type="binding site" evidence="1">
    <location>
        <position position="49"/>
    </location>
    <ligand>
        <name>Mg(2+)</name>
        <dbReference type="ChEBI" id="CHEBI:18420"/>
    </ligand>
</feature>
<feature type="binding site" evidence="1">
    <location>
        <position position="122"/>
    </location>
    <ligand>
        <name>Mg(2+)</name>
        <dbReference type="ChEBI" id="CHEBI:18420"/>
    </ligand>
</feature>
<feature type="binding site" evidence="1">
    <location>
        <position position="125"/>
    </location>
    <ligand>
        <name>Mg(2+)</name>
        <dbReference type="ChEBI" id="CHEBI:18420"/>
    </ligand>
</feature>
<protein>
    <recommendedName>
        <fullName evidence="1">Ribonuclease 3</fullName>
        <ecNumber evidence="1">3.1.26.3</ecNumber>
    </recommendedName>
    <alternativeName>
        <fullName evidence="1">Ribonuclease III</fullName>
        <shortName evidence="1">RNase III</shortName>
    </alternativeName>
</protein>